<evidence type="ECO:0000255" key="1">
    <source>
        <dbReference type="HAMAP-Rule" id="MF_00151"/>
    </source>
</evidence>
<protein>
    <recommendedName>
        <fullName evidence="1">Phosphopantetheine adenylyltransferase</fullName>
        <ecNumber evidence="1">2.7.7.3</ecNumber>
    </recommendedName>
    <alternativeName>
        <fullName evidence="1">Dephospho-CoA pyrophosphorylase</fullName>
    </alternativeName>
    <alternativeName>
        <fullName evidence="1">Pantetheine-phosphate adenylyltransferase</fullName>
        <shortName evidence="1">PPAT</shortName>
    </alternativeName>
</protein>
<reference key="1">
    <citation type="submission" date="2009-03" db="EMBL/GenBank/DDBJ databases">
        <title>Complete genome sequence of Edwardsiella ictaluri 93-146.</title>
        <authorList>
            <person name="Williams M.L."/>
            <person name="Gillaspy A.F."/>
            <person name="Dyer D.W."/>
            <person name="Thune R.L."/>
            <person name="Waldbieser G.C."/>
            <person name="Schuster S.C."/>
            <person name="Gipson J."/>
            <person name="Zaitshik J."/>
            <person name="Landry C."/>
            <person name="Lawrence M.L."/>
        </authorList>
    </citation>
    <scope>NUCLEOTIDE SEQUENCE [LARGE SCALE GENOMIC DNA]</scope>
    <source>
        <strain>93-146</strain>
    </source>
</reference>
<proteinExistence type="inferred from homology"/>
<dbReference type="EC" id="2.7.7.3" evidence="1"/>
<dbReference type="EMBL" id="CP001600">
    <property type="protein sequence ID" value="ACR67318.1"/>
    <property type="molecule type" value="Genomic_DNA"/>
</dbReference>
<dbReference type="RefSeq" id="WP_015869541.1">
    <property type="nucleotide sequence ID" value="NZ_CP169062.1"/>
</dbReference>
<dbReference type="SMR" id="C5B9D9"/>
<dbReference type="STRING" id="67780.B6E78_11450"/>
<dbReference type="GeneID" id="69537168"/>
<dbReference type="KEGG" id="eic:NT01EI_0058"/>
<dbReference type="PATRIC" id="fig|634503.3.peg.52"/>
<dbReference type="HOGENOM" id="CLU_100149_0_1_6"/>
<dbReference type="OrthoDB" id="9806661at2"/>
<dbReference type="UniPathway" id="UPA00241">
    <property type="reaction ID" value="UER00355"/>
</dbReference>
<dbReference type="Proteomes" id="UP000001485">
    <property type="component" value="Chromosome"/>
</dbReference>
<dbReference type="GO" id="GO:0005737">
    <property type="term" value="C:cytoplasm"/>
    <property type="evidence" value="ECO:0007669"/>
    <property type="project" value="UniProtKB-SubCell"/>
</dbReference>
<dbReference type="GO" id="GO:0005524">
    <property type="term" value="F:ATP binding"/>
    <property type="evidence" value="ECO:0007669"/>
    <property type="project" value="UniProtKB-KW"/>
</dbReference>
<dbReference type="GO" id="GO:0004595">
    <property type="term" value="F:pantetheine-phosphate adenylyltransferase activity"/>
    <property type="evidence" value="ECO:0007669"/>
    <property type="project" value="UniProtKB-UniRule"/>
</dbReference>
<dbReference type="GO" id="GO:0015937">
    <property type="term" value="P:coenzyme A biosynthetic process"/>
    <property type="evidence" value="ECO:0007669"/>
    <property type="project" value="UniProtKB-UniRule"/>
</dbReference>
<dbReference type="CDD" id="cd02163">
    <property type="entry name" value="PPAT"/>
    <property type="match status" value="1"/>
</dbReference>
<dbReference type="FunFam" id="3.40.50.620:FF:000012">
    <property type="entry name" value="Phosphopantetheine adenylyltransferase"/>
    <property type="match status" value="1"/>
</dbReference>
<dbReference type="Gene3D" id="3.40.50.620">
    <property type="entry name" value="HUPs"/>
    <property type="match status" value="1"/>
</dbReference>
<dbReference type="HAMAP" id="MF_00151">
    <property type="entry name" value="PPAT_bact"/>
    <property type="match status" value="1"/>
</dbReference>
<dbReference type="InterPro" id="IPR004821">
    <property type="entry name" value="Cyt_trans-like"/>
</dbReference>
<dbReference type="InterPro" id="IPR001980">
    <property type="entry name" value="PPAT"/>
</dbReference>
<dbReference type="InterPro" id="IPR014729">
    <property type="entry name" value="Rossmann-like_a/b/a_fold"/>
</dbReference>
<dbReference type="NCBIfam" id="TIGR01510">
    <property type="entry name" value="coaD_prev_kdtB"/>
    <property type="match status" value="1"/>
</dbReference>
<dbReference type="NCBIfam" id="TIGR00125">
    <property type="entry name" value="cyt_tran_rel"/>
    <property type="match status" value="1"/>
</dbReference>
<dbReference type="PANTHER" id="PTHR21342">
    <property type="entry name" value="PHOSPHOPANTETHEINE ADENYLYLTRANSFERASE"/>
    <property type="match status" value="1"/>
</dbReference>
<dbReference type="PANTHER" id="PTHR21342:SF1">
    <property type="entry name" value="PHOSPHOPANTETHEINE ADENYLYLTRANSFERASE"/>
    <property type="match status" value="1"/>
</dbReference>
<dbReference type="Pfam" id="PF01467">
    <property type="entry name" value="CTP_transf_like"/>
    <property type="match status" value="1"/>
</dbReference>
<dbReference type="PRINTS" id="PR01020">
    <property type="entry name" value="LPSBIOSNTHSS"/>
</dbReference>
<dbReference type="SUPFAM" id="SSF52374">
    <property type="entry name" value="Nucleotidylyl transferase"/>
    <property type="match status" value="1"/>
</dbReference>
<comment type="function">
    <text evidence="1">Reversibly transfers an adenylyl group from ATP to 4'-phosphopantetheine, yielding dephospho-CoA (dPCoA) and pyrophosphate.</text>
</comment>
<comment type="catalytic activity">
    <reaction evidence="1">
        <text>(R)-4'-phosphopantetheine + ATP + H(+) = 3'-dephospho-CoA + diphosphate</text>
        <dbReference type="Rhea" id="RHEA:19801"/>
        <dbReference type="ChEBI" id="CHEBI:15378"/>
        <dbReference type="ChEBI" id="CHEBI:30616"/>
        <dbReference type="ChEBI" id="CHEBI:33019"/>
        <dbReference type="ChEBI" id="CHEBI:57328"/>
        <dbReference type="ChEBI" id="CHEBI:61723"/>
        <dbReference type="EC" id="2.7.7.3"/>
    </reaction>
</comment>
<comment type="cofactor">
    <cofactor evidence="1">
        <name>Mg(2+)</name>
        <dbReference type="ChEBI" id="CHEBI:18420"/>
    </cofactor>
</comment>
<comment type="pathway">
    <text evidence="1">Cofactor biosynthesis; coenzyme A biosynthesis; CoA from (R)-pantothenate: step 4/5.</text>
</comment>
<comment type="subunit">
    <text evidence="1">Homohexamer.</text>
</comment>
<comment type="subcellular location">
    <subcellularLocation>
        <location evidence="1">Cytoplasm</location>
    </subcellularLocation>
</comment>
<comment type="similarity">
    <text evidence="1">Belongs to the bacterial CoaD family.</text>
</comment>
<sequence length="161" mass="17847">MSRTAIYPGTFDPLTNGHLDIVTRAAHMFDSVILAIAASPGKQPLFTLEERVAMAREVTAHLTNVEVHGFSELMAHFAQRQGANILVRGLRAVSDFEYELQLANMNRHLMPTLESVFLMPAEAWSFISSSLVKEVARHGGDVDAFLPEQVARALMTRLRDA</sequence>
<keyword id="KW-0067">ATP-binding</keyword>
<keyword id="KW-0173">Coenzyme A biosynthesis</keyword>
<keyword id="KW-0963">Cytoplasm</keyword>
<keyword id="KW-0460">Magnesium</keyword>
<keyword id="KW-0547">Nucleotide-binding</keyword>
<keyword id="KW-0548">Nucleotidyltransferase</keyword>
<keyword id="KW-0808">Transferase</keyword>
<gene>
    <name evidence="1" type="primary">coaD</name>
    <name type="ordered locus">NT01EI_0058</name>
</gene>
<name>COAD_EDWI9</name>
<organism>
    <name type="scientific">Edwardsiella ictaluri (strain 93-146)</name>
    <dbReference type="NCBI Taxonomy" id="634503"/>
    <lineage>
        <taxon>Bacteria</taxon>
        <taxon>Pseudomonadati</taxon>
        <taxon>Pseudomonadota</taxon>
        <taxon>Gammaproteobacteria</taxon>
        <taxon>Enterobacterales</taxon>
        <taxon>Hafniaceae</taxon>
        <taxon>Edwardsiella</taxon>
    </lineage>
</organism>
<accession>C5B9D9</accession>
<feature type="chain" id="PRO_1000203419" description="Phosphopantetheine adenylyltransferase">
    <location>
        <begin position="1"/>
        <end position="161"/>
    </location>
</feature>
<feature type="binding site" evidence="1">
    <location>
        <begin position="10"/>
        <end position="11"/>
    </location>
    <ligand>
        <name>ATP</name>
        <dbReference type="ChEBI" id="CHEBI:30616"/>
    </ligand>
</feature>
<feature type="binding site" evidence="1">
    <location>
        <position position="10"/>
    </location>
    <ligand>
        <name>substrate</name>
    </ligand>
</feature>
<feature type="binding site" evidence="1">
    <location>
        <position position="18"/>
    </location>
    <ligand>
        <name>ATP</name>
        <dbReference type="ChEBI" id="CHEBI:30616"/>
    </ligand>
</feature>
<feature type="binding site" evidence="1">
    <location>
        <position position="42"/>
    </location>
    <ligand>
        <name>substrate</name>
    </ligand>
</feature>
<feature type="binding site" evidence="1">
    <location>
        <position position="74"/>
    </location>
    <ligand>
        <name>substrate</name>
    </ligand>
</feature>
<feature type="binding site" evidence="1">
    <location>
        <position position="88"/>
    </location>
    <ligand>
        <name>substrate</name>
    </ligand>
</feature>
<feature type="binding site" evidence="1">
    <location>
        <begin position="89"/>
        <end position="91"/>
    </location>
    <ligand>
        <name>ATP</name>
        <dbReference type="ChEBI" id="CHEBI:30616"/>
    </ligand>
</feature>
<feature type="binding site" evidence="1">
    <location>
        <position position="99"/>
    </location>
    <ligand>
        <name>ATP</name>
        <dbReference type="ChEBI" id="CHEBI:30616"/>
    </ligand>
</feature>
<feature type="binding site" evidence="1">
    <location>
        <begin position="124"/>
        <end position="130"/>
    </location>
    <ligand>
        <name>ATP</name>
        <dbReference type="ChEBI" id="CHEBI:30616"/>
    </ligand>
</feature>
<feature type="site" description="Transition state stabilizer" evidence="1">
    <location>
        <position position="18"/>
    </location>
</feature>